<feature type="initiator methionine" description="Removed" evidence="1">
    <location>
        <position position="1"/>
    </location>
</feature>
<feature type="chain" id="PRO_0000147526" description="Tetrahydromethanopterin S-methyltransferase subunit C">
    <location>
        <begin position="2"/>
        <end position="267"/>
    </location>
</feature>
<feature type="transmembrane region" description="Helical" evidence="2">
    <location>
        <begin position="18"/>
        <end position="38"/>
    </location>
</feature>
<feature type="transmembrane region" description="Helical" evidence="2">
    <location>
        <begin position="39"/>
        <end position="59"/>
    </location>
</feature>
<feature type="transmembrane region" description="Helical" evidence="2">
    <location>
        <begin position="76"/>
        <end position="96"/>
    </location>
</feature>
<feature type="transmembrane region" description="Helical" evidence="2">
    <location>
        <begin position="99"/>
        <end position="119"/>
    </location>
</feature>
<feature type="transmembrane region" description="Helical" evidence="2">
    <location>
        <begin position="138"/>
        <end position="158"/>
    </location>
</feature>
<feature type="transmembrane region" description="Helical" evidence="2">
    <location>
        <begin position="163"/>
        <end position="183"/>
    </location>
</feature>
<feature type="transmembrane region" description="Helical" evidence="2">
    <location>
        <begin position="209"/>
        <end position="229"/>
    </location>
</feature>
<feature type="transmembrane region" description="Helical" evidence="2">
    <location>
        <begin position="230"/>
        <end position="250"/>
    </location>
</feature>
<protein>
    <recommendedName>
        <fullName>Tetrahydromethanopterin S-methyltransferase subunit C</fullName>
        <ecNumber>7.2.1.4</ecNumber>
    </recommendedName>
    <alternativeName>
        <fullName>N5-methyltetrahydromethanopterin--coenzyme M methyltransferase subunit C</fullName>
    </alternativeName>
</protein>
<organism>
    <name type="scientific">Methanothermobacter thermautotrophicus (strain ATCC 29096 / DSM 1053 / JCM 10044 / NBRC 100330 / Delta H)</name>
    <name type="common">Methanobacterium thermoautotrophicum</name>
    <dbReference type="NCBI Taxonomy" id="187420"/>
    <lineage>
        <taxon>Archaea</taxon>
        <taxon>Methanobacteriati</taxon>
        <taxon>Methanobacteriota</taxon>
        <taxon>Methanomada group</taxon>
        <taxon>Methanobacteria</taxon>
        <taxon>Methanobacteriales</taxon>
        <taxon>Methanobacteriaceae</taxon>
        <taxon>Methanothermobacter</taxon>
    </lineage>
</organism>
<accession>O27229</accession>
<reference key="1">
    <citation type="journal article" date="1997" name="J. Bacteriol.">
        <title>Complete genome sequence of Methanobacterium thermoautotrophicum deltaH: functional analysis and comparative genomics.</title>
        <authorList>
            <person name="Smith D.R."/>
            <person name="Doucette-Stamm L.A."/>
            <person name="Deloughery C."/>
            <person name="Lee H.-M."/>
            <person name="Dubois J."/>
            <person name="Aldredge T."/>
            <person name="Bashirzadeh R."/>
            <person name="Blakely D."/>
            <person name="Cook R."/>
            <person name="Gilbert K."/>
            <person name="Harrison D."/>
            <person name="Hoang L."/>
            <person name="Keagle P."/>
            <person name="Lumm W."/>
            <person name="Pothier B."/>
            <person name="Qiu D."/>
            <person name="Spadafora R."/>
            <person name="Vicare R."/>
            <person name="Wang Y."/>
            <person name="Wierzbowski J."/>
            <person name="Gibson R."/>
            <person name="Jiwani N."/>
            <person name="Caruso A."/>
            <person name="Bush D."/>
            <person name="Safer H."/>
            <person name="Patwell D."/>
            <person name="Prabhakar S."/>
            <person name="McDougall S."/>
            <person name="Shimer G."/>
            <person name="Goyal A."/>
            <person name="Pietrovski S."/>
            <person name="Church G.M."/>
            <person name="Daniels C.J."/>
            <person name="Mao J.-I."/>
            <person name="Rice P."/>
            <person name="Noelling J."/>
            <person name="Reeve J.N."/>
        </authorList>
    </citation>
    <scope>NUCLEOTIDE SEQUENCE [LARGE SCALE GENOMIC DNA]</scope>
    <source>
        <strain>ATCC 29096 / DSM 1053 / JCM 10044 / NBRC 100330 / Delta H</strain>
    </source>
</reference>
<sequence>MSVAAGGPAGAAIPESRLMALGIIGGLGGIYASTVNPVIGPVFASLGAVCAIIWGADAIRRVASYGLGTGVPSIGYMSVSIGIVGVVAGLASVFTLPALAAPVVGLILAMILGVVVAVLGKKIVKMKIPILEKCTAEISGAAALSVLGFSAAIAGSYTMQAVLTSVIATGFIGLLFILNTMAIQHPFNACLGPNENQTRTLKLAASTGFISMAIAGLLGIGLNPGWWLVSLVGALCWVVAFKSFVSASFEEAASVKWSGLWPKEEEQ</sequence>
<keyword id="KW-1003">Cell membrane</keyword>
<keyword id="KW-0472">Membrane</keyword>
<keyword id="KW-0484">Methanogenesis</keyword>
<keyword id="KW-0489">Methyltransferase</keyword>
<keyword id="KW-0554">One-carbon metabolism</keyword>
<keyword id="KW-1185">Reference proteome</keyword>
<keyword id="KW-0808">Transferase</keyword>
<keyword id="KW-1278">Translocase</keyword>
<keyword id="KW-0812">Transmembrane</keyword>
<keyword id="KW-1133">Transmembrane helix</keyword>
<proteinExistence type="inferred from homology"/>
<gene>
    <name type="primary">mtrC</name>
    <name type="ordered locus">MTH_1161</name>
</gene>
<comment type="function">
    <text evidence="1">Part of a complex that catalyzes the formation of methyl-coenzyme M and tetrahydromethanopterin from coenzyme M and methyl-tetrahydromethanopterin. This is an energy-conserving, sodium-ion translocating step.</text>
</comment>
<comment type="catalytic activity">
    <reaction>
        <text>5-methyl-5,6,7,8-tetrahydromethanopterin + coenzyme M + 2 Na(+)(in) = 5,6,7,8-tetrahydromethanopterin + methyl-coenzyme M + 2 Na(+)(out)</text>
        <dbReference type="Rhea" id="RHEA:53492"/>
        <dbReference type="ChEBI" id="CHEBI:29101"/>
        <dbReference type="ChEBI" id="CHEBI:58103"/>
        <dbReference type="ChEBI" id="CHEBI:58116"/>
        <dbReference type="ChEBI" id="CHEBI:58286"/>
        <dbReference type="ChEBI" id="CHEBI:58319"/>
        <dbReference type="EC" id="7.2.1.4"/>
    </reaction>
</comment>
<comment type="pathway">
    <text>One-carbon metabolism; methanogenesis from CO(2); methyl-coenzyme M from 5,10-methylene-5,6,7,8-tetrahydromethanopterin: step 2/2.</text>
</comment>
<comment type="subunit">
    <text evidence="1">The complex is composed of 8 subunits; MtrA, MtrB, MtrC, MtrD, MtrE, MtrF, MtrG and MtrH.</text>
</comment>
<comment type="subcellular location">
    <subcellularLocation>
        <location evidence="3">Cell membrane</location>
        <topology evidence="3">Multi-pass membrane protein</topology>
    </subcellularLocation>
</comment>
<comment type="similarity">
    <text evidence="3">Belongs to the MtrC family.</text>
</comment>
<evidence type="ECO:0000250" key="1"/>
<evidence type="ECO:0000255" key="2"/>
<evidence type="ECO:0000305" key="3"/>
<dbReference type="EC" id="7.2.1.4"/>
<dbReference type="EMBL" id="AE000666">
    <property type="protein sequence ID" value="AAB85650.1"/>
    <property type="molecule type" value="Genomic_DNA"/>
</dbReference>
<dbReference type="PIR" id="G69021">
    <property type="entry name" value="G69021"/>
</dbReference>
<dbReference type="RefSeq" id="WP_010876785.1">
    <property type="nucleotide sequence ID" value="NC_000916.1"/>
</dbReference>
<dbReference type="SMR" id="O27229"/>
<dbReference type="FunCoup" id="O27229">
    <property type="interactions" value="66"/>
</dbReference>
<dbReference type="IntAct" id="O27229">
    <property type="interactions" value="6"/>
</dbReference>
<dbReference type="STRING" id="187420.MTH_1161"/>
<dbReference type="PaxDb" id="187420-MTH_1161"/>
<dbReference type="EnsemblBacteria" id="AAB85650">
    <property type="protein sequence ID" value="AAB85650"/>
    <property type="gene ID" value="MTH_1161"/>
</dbReference>
<dbReference type="GeneID" id="1471569"/>
<dbReference type="GeneID" id="77401690"/>
<dbReference type="KEGG" id="mth:MTH_1161"/>
<dbReference type="PATRIC" id="fig|187420.15.peg.1138"/>
<dbReference type="HOGENOM" id="CLU_092286_0_0_2"/>
<dbReference type="InParanoid" id="O27229"/>
<dbReference type="UniPathway" id="UPA00640">
    <property type="reaction ID" value="UER00698"/>
</dbReference>
<dbReference type="Proteomes" id="UP000005223">
    <property type="component" value="Chromosome"/>
</dbReference>
<dbReference type="GO" id="GO:0005886">
    <property type="term" value="C:plasma membrane"/>
    <property type="evidence" value="ECO:0007669"/>
    <property type="project" value="UniProtKB-SubCell"/>
</dbReference>
<dbReference type="GO" id="GO:0030269">
    <property type="term" value="F:tetrahydromethanopterin S-methyltransferase activity"/>
    <property type="evidence" value="ECO:0007669"/>
    <property type="project" value="UniProtKB-UniRule"/>
</dbReference>
<dbReference type="GO" id="GO:0019386">
    <property type="term" value="P:methanogenesis, from carbon dioxide"/>
    <property type="evidence" value="ECO:0007669"/>
    <property type="project" value="UniProtKB-UniRule"/>
</dbReference>
<dbReference type="GO" id="GO:0032259">
    <property type="term" value="P:methylation"/>
    <property type="evidence" value="ECO:0007669"/>
    <property type="project" value="UniProtKB-KW"/>
</dbReference>
<dbReference type="GO" id="GO:0006730">
    <property type="term" value="P:one-carbon metabolic process"/>
    <property type="evidence" value="ECO:0007669"/>
    <property type="project" value="UniProtKB-UniRule"/>
</dbReference>
<dbReference type="HAMAP" id="MF_01096">
    <property type="entry name" value="MtrC"/>
    <property type="match status" value="1"/>
</dbReference>
<dbReference type="InterPro" id="IPR005865">
    <property type="entry name" value="THM_MeTrfase_su_C"/>
</dbReference>
<dbReference type="NCBIfam" id="TIGR01148">
    <property type="entry name" value="mtrC"/>
    <property type="match status" value="1"/>
</dbReference>
<dbReference type="Pfam" id="PF04211">
    <property type="entry name" value="MtrC"/>
    <property type="match status" value="1"/>
</dbReference>
<dbReference type="PIRSF" id="PIRSF006530">
    <property type="entry name" value="MtrC"/>
    <property type="match status" value="1"/>
</dbReference>
<name>MTRC_METTH</name>